<reference key="1">
    <citation type="journal article" date="2003" name="Mol. Biol. Evol.">
        <title>Population differences in the human functional olfactory repertoire.</title>
        <authorList>
            <person name="Gilad Y."/>
            <person name="Lancet D."/>
        </authorList>
    </citation>
    <scope>NUCLEOTIDE SEQUENCE [GENOMIC DNA]</scope>
</reference>
<reference key="2">
    <citation type="journal article" date="2006" name="Nature">
        <title>Human chromosome 11 DNA sequence and analysis including novel gene identification.</title>
        <authorList>
            <person name="Taylor T.D."/>
            <person name="Noguchi H."/>
            <person name="Totoki Y."/>
            <person name="Toyoda A."/>
            <person name="Kuroki Y."/>
            <person name="Dewar K."/>
            <person name="Lloyd C."/>
            <person name="Itoh T."/>
            <person name="Takeda T."/>
            <person name="Kim D.-W."/>
            <person name="She X."/>
            <person name="Barlow K.F."/>
            <person name="Bloom T."/>
            <person name="Bruford E."/>
            <person name="Chang J.L."/>
            <person name="Cuomo C.A."/>
            <person name="Eichler E."/>
            <person name="FitzGerald M.G."/>
            <person name="Jaffe D.B."/>
            <person name="LaButti K."/>
            <person name="Nicol R."/>
            <person name="Park H.-S."/>
            <person name="Seaman C."/>
            <person name="Sougnez C."/>
            <person name="Yang X."/>
            <person name="Zimmer A.R."/>
            <person name="Zody M.C."/>
            <person name="Birren B.W."/>
            <person name="Nusbaum C."/>
            <person name="Fujiyama A."/>
            <person name="Hattori M."/>
            <person name="Rogers J."/>
            <person name="Lander E.S."/>
            <person name="Sakaki Y."/>
        </authorList>
    </citation>
    <scope>NUCLEOTIDE SEQUENCE [LARGE SCALE GENOMIC DNA]</scope>
</reference>
<reference key="3">
    <citation type="journal article" date="2004" name="Proc. Natl. Acad. Sci. U.S.A.">
        <title>The human olfactory receptor gene family.</title>
        <authorList>
            <person name="Malnic B."/>
            <person name="Godfrey P.A."/>
            <person name="Buck L.B."/>
        </authorList>
    </citation>
    <scope>IDENTIFICATION</scope>
</reference>
<reference key="4">
    <citation type="journal article" date="2004" name="Proc. Natl. Acad. Sci. U.S.A.">
        <authorList>
            <person name="Malnic B."/>
            <person name="Godfrey P.A."/>
            <person name="Buck L.B."/>
        </authorList>
    </citation>
    <scope>ERRATUM OF PUBMED:14983052</scope>
</reference>
<reference key="5">
    <citation type="journal article" date="2003" name="Nat. Genet.">
        <title>Different noses for different people.</title>
        <authorList>
            <person name="Menashe I."/>
            <person name="Man O."/>
            <person name="Lancet D."/>
            <person name="Gilad Y."/>
        </authorList>
    </citation>
    <scope>POLYMORPHISM</scope>
</reference>
<accession>P0C604</accession>
<dbReference type="EMBL" id="AF546448">
    <property type="status" value="NOT_ANNOTATED_CDS"/>
    <property type="molecule type" value="Genomic_DNA"/>
</dbReference>
<dbReference type="EMBL" id="AC087377">
    <property type="status" value="NOT_ANNOTATED_CDS"/>
    <property type="molecule type" value="Genomic_DNA"/>
</dbReference>
<dbReference type="EMBL" id="BK004702">
    <property type="status" value="NOT_ANNOTATED_CDS"/>
    <property type="molecule type" value="Genomic_DNA"/>
</dbReference>
<dbReference type="SMR" id="P0C604"/>
<dbReference type="GlyCosmos" id="P0C604">
    <property type="glycosylation" value="1 site, No reported glycans"/>
</dbReference>
<dbReference type="GlyGen" id="P0C604">
    <property type="glycosylation" value="2 sites"/>
</dbReference>
<dbReference type="BioMuta" id="OR4A8"/>
<dbReference type="DMDM" id="166215770"/>
<dbReference type="jPOST" id="P0C604"/>
<dbReference type="MassIVE" id="P0C604"/>
<dbReference type="PeptideAtlas" id="P0C604"/>
<dbReference type="AGR" id="HGNC:15165"/>
<dbReference type="GeneCards" id="OR4A8"/>
<dbReference type="HGNC" id="HGNC:15165">
    <property type="gene designation" value="OR4A8"/>
</dbReference>
<dbReference type="neXtProt" id="NX_P0C604"/>
<dbReference type="InParanoid" id="P0C604"/>
<dbReference type="OrthoDB" id="10017003at2759"/>
<dbReference type="PAN-GO" id="P0C604">
    <property type="GO annotations" value="2 GO annotations based on evolutionary models"/>
</dbReference>
<dbReference type="PhylomeDB" id="P0C604"/>
<dbReference type="PathwayCommons" id="P0C604"/>
<dbReference type="Reactome" id="R-HSA-9752946">
    <property type="pathway name" value="Expression and translocation of olfactory receptors"/>
</dbReference>
<dbReference type="Pharos" id="P0C604">
    <property type="development level" value="Tdark"/>
</dbReference>
<dbReference type="PRO" id="PR:P0C604"/>
<dbReference type="Proteomes" id="UP000005640">
    <property type="component" value="Unplaced"/>
</dbReference>
<dbReference type="RNAct" id="P0C604">
    <property type="molecule type" value="protein"/>
</dbReference>
<dbReference type="GO" id="GO:0005886">
    <property type="term" value="C:plasma membrane"/>
    <property type="evidence" value="ECO:0000318"/>
    <property type="project" value="GO_Central"/>
</dbReference>
<dbReference type="GO" id="GO:0004930">
    <property type="term" value="F:G protein-coupled receptor activity"/>
    <property type="evidence" value="ECO:0007669"/>
    <property type="project" value="UniProtKB-KW"/>
</dbReference>
<dbReference type="GO" id="GO:0004984">
    <property type="term" value="F:olfactory receptor activity"/>
    <property type="evidence" value="ECO:0000318"/>
    <property type="project" value="GO_Central"/>
</dbReference>
<dbReference type="CDD" id="cd15939">
    <property type="entry name" value="7tmA_OR4A-like"/>
    <property type="match status" value="1"/>
</dbReference>
<dbReference type="FunFam" id="1.20.1070.10:FF:000007">
    <property type="entry name" value="Olfactory receptor"/>
    <property type="match status" value="1"/>
</dbReference>
<dbReference type="Gene3D" id="1.20.1070.10">
    <property type="entry name" value="Rhodopsin 7-helix transmembrane proteins"/>
    <property type="match status" value="1"/>
</dbReference>
<dbReference type="InterPro" id="IPR000276">
    <property type="entry name" value="GPCR_Rhodpsn"/>
</dbReference>
<dbReference type="InterPro" id="IPR017452">
    <property type="entry name" value="GPCR_Rhodpsn_7TM"/>
</dbReference>
<dbReference type="InterPro" id="IPR000725">
    <property type="entry name" value="Olfact_rcpt"/>
</dbReference>
<dbReference type="InterPro" id="IPR050427">
    <property type="entry name" value="Olfactory_Receptors"/>
</dbReference>
<dbReference type="PANTHER" id="PTHR48002">
    <property type="entry name" value="OLFACTORY RECEPTOR"/>
    <property type="match status" value="1"/>
</dbReference>
<dbReference type="Pfam" id="PF13853">
    <property type="entry name" value="7tm_4"/>
    <property type="match status" value="1"/>
</dbReference>
<dbReference type="PRINTS" id="PR00237">
    <property type="entry name" value="GPCRRHODOPSN"/>
</dbReference>
<dbReference type="PRINTS" id="PR00245">
    <property type="entry name" value="OLFACTORYR"/>
</dbReference>
<dbReference type="SUPFAM" id="SSF81321">
    <property type="entry name" value="Family A G protein-coupled receptor-like"/>
    <property type="match status" value="1"/>
</dbReference>
<dbReference type="PROSITE" id="PS50262">
    <property type="entry name" value="G_PROTEIN_RECEP_F1_2"/>
    <property type="match status" value="1"/>
</dbReference>
<keyword id="KW-1003">Cell membrane</keyword>
<keyword id="KW-1015">Disulfide bond</keyword>
<keyword id="KW-0297">G-protein coupled receptor</keyword>
<keyword id="KW-0325">Glycoprotein</keyword>
<keyword id="KW-0472">Membrane</keyword>
<keyword id="KW-0552">Olfaction</keyword>
<keyword id="KW-0675">Receptor</keyword>
<keyword id="KW-1185">Reference proteome</keyword>
<keyword id="KW-0716">Sensory transduction</keyword>
<keyword id="KW-0807">Transducer</keyword>
<keyword id="KW-0812">Transmembrane</keyword>
<keyword id="KW-1133">Transmembrane helix</keyword>
<sequence>MRQNNNITEFVLLGFSQYPDVQNALFVMFLLIYIVTMVGNLLIVVSIIASPFLGSPVYFFLACLSFIDAVYSTTISPVLIVDLLCDKKTISFPACMGQLFIEHLFGDTDVFLLVVMAYDRYVATCKPLRYLTIMNRQVCILLLVVAVTGGFLHSVFQILVVYSLPFCGPNVIYHFFCNIYPLLDLECTDTYFVGLAVVFNGGAICMVIFTLLLISYGVILNSLKTYSPEGRHKAPFICSSHFIMVILFFVPCIFLYVRPVSNFPIDKFLTVFYSVITPKLNPFIYMLRNSEMRNAIENLLGYQSGKTGFRCSKLN</sequence>
<protein>
    <recommendedName>
        <fullName>Olfactory receptor 4A8</fullName>
    </recommendedName>
    <alternativeName>
        <fullName>Olfactory receptor OR11-110</fullName>
    </alternativeName>
</protein>
<organism>
    <name type="scientific">Homo sapiens</name>
    <name type="common">Human</name>
    <dbReference type="NCBI Taxonomy" id="9606"/>
    <lineage>
        <taxon>Eukaryota</taxon>
        <taxon>Metazoa</taxon>
        <taxon>Chordata</taxon>
        <taxon>Craniata</taxon>
        <taxon>Vertebrata</taxon>
        <taxon>Euteleostomi</taxon>
        <taxon>Mammalia</taxon>
        <taxon>Eutheria</taxon>
        <taxon>Euarchontoglires</taxon>
        <taxon>Primates</taxon>
        <taxon>Haplorrhini</taxon>
        <taxon>Catarrhini</taxon>
        <taxon>Hominidae</taxon>
        <taxon>Homo</taxon>
    </lineage>
</organism>
<comment type="function">
    <text evidence="4">Odorant receptor.</text>
</comment>
<comment type="subcellular location">
    <subcellularLocation>
        <location>Cell membrane</location>
        <topology>Multi-pass membrane protein</topology>
    </subcellularLocation>
</comment>
<comment type="polymorphism">
    <text evidence="3">A stop codon in the gene coding for this protein at position Arg-136 is responsible for functional diversity thus producing a pseudogene. The stop codon is more frequent in African-Americans than in non-Africans.</text>
</comment>
<comment type="similarity">
    <text evidence="2">Belongs to the G-protein coupled receptor 1 family.</text>
</comment>
<comment type="online information" name="Human Olfactory Receptor Data Exploratorium (HORDE)">
    <link uri="http://genome.weizmann.ac.il/horde/card/index/symbol:OR4A8P"/>
</comment>
<name>OR4A8_HUMAN</name>
<feature type="chain" id="PRO_0000314021" description="Olfactory receptor 4A8">
    <location>
        <begin position="1"/>
        <end position="315"/>
    </location>
</feature>
<feature type="topological domain" description="Extracellular" evidence="1">
    <location>
        <begin position="1"/>
        <end position="24"/>
    </location>
</feature>
<feature type="transmembrane region" description="Helical; Name=1" evidence="1">
    <location>
        <begin position="25"/>
        <end position="45"/>
    </location>
</feature>
<feature type="topological domain" description="Cytoplasmic" evidence="1">
    <location>
        <begin position="46"/>
        <end position="57"/>
    </location>
</feature>
<feature type="transmembrane region" description="Helical; Name=2" evidence="1">
    <location>
        <begin position="58"/>
        <end position="80"/>
    </location>
</feature>
<feature type="topological domain" description="Extracellular" evidence="1">
    <location>
        <begin position="81"/>
        <end position="95"/>
    </location>
</feature>
<feature type="transmembrane region" description="Helical; Name=3" evidence="1">
    <location>
        <begin position="96"/>
        <end position="116"/>
    </location>
</feature>
<feature type="topological domain" description="Cytoplasmic" evidence="1">
    <location>
        <begin position="117"/>
        <end position="139"/>
    </location>
</feature>
<feature type="transmembrane region" description="Helical; Name=4" evidence="1">
    <location>
        <begin position="140"/>
        <end position="160"/>
    </location>
</feature>
<feature type="topological domain" description="Extracellular" evidence="1">
    <location>
        <begin position="161"/>
        <end position="193"/>
    </location>
</feature>
<feature type="transmembrane region" description="Helical; Name=5" evidence="1">
    <location>
        <begin position="194"/>
        <end position="214"/>
    </location>
</feature>
<feature type="topological domain" description="Cytoplasmic" evidence="1">
    <location>
        <begin position="215"/>
        <end position="235"/>
    </location>
</feature>
<feature type="transmembrane region" description="Helical; Name=6" evidence="1">
    <location>
        <begin position="236"/>
        <end position="256"/>
    </location>
</feature>
<feature type="topological domain" description="Extracellular" evidence="1">
    <location>
        <begin position="257"/>
        <end position="266"/>
    </location>
</feature>
<feature type="transmembrane region" description="Helical; Name=7" evidence="1">
    <location>
        <begin position="267"/>
        <end position="287"/>
    </location>
</feature>
<feature type="topological domain" description="Cytoplasmic" evidence="1">
    <location>
        <begin position="288"/>
        <end position="315"/>
    </location>
</feature>
<feature type="glycosylation site" description="N-linked (GlcNAc...) asparagine" evidence="1">
    <location>
        <position position="6"/>
    </location>
</feature>
<feature type="disulfide bond" evidence="2">
    <location>
        <begin position="95"/>
        <end position="177"/>
    </location>
</feature>
<gene>
    <name type="primary">OR4A8</name>
    <name type="synonym">OR4A8P</name>
</gene>
<evidence type="ECO:0000255" key="1"/>
<evidence type="ECO:0000255" key="2">
    <source>
        <dbReference type="PROSITE-ProRule" id="PRU00521"/>
    </source>
</evidence>
<evidence type="ECO:0000269" key="3">
    <source>
    </source>
</evidence>
<evidence type="ECO:0000305" key="4"/>
<proteinExistence type="inferred from homology"/>